<sequence>MSQNSSSLLETWRQVVEDLNALSQQQDSGIPPLTPTQRAYLNLAKPIALVDGYAVLSTPHALAKNAIEHDLGESLTKVLSMRMGRSFSLAVSVEPSRDGEDPNAPPAPRQQELNYPYPGQGPQSPQGQQGQQGQHPVQQEVRAHAPAPHQQGQHQAAQHQPPANQAPGQYVVGGERGQASQSAGAWEQTHSMPAFDQGFDPSPAPVEPPPQPAHPLRIPRETPAHNPNREVSLNPKYTFENFVIGPFNRFANAAAVAVAESPAKAFNPLFISGGSGLGKTHLLHAVGNYAQELQPGLRIKYVSSEEFTNDYINSVRDDRQESFKRRYRNLDILMVDDIQFLAGKEGTQEEFFHTFNALHQAEKQIILSSDRPPRQLTTLEDRLRTRFEGGLITDIQPPDLETRIAILMKKAQADGTHVDREVLELIASRFESSIRELEGALIRVSAYSSLINQPIDKEMAIVALRDILPEPEDMEITAPVIMEVTAEYFKISVDTLRGAGKTRAVAHARQLAMYLCRELTDMSLPKIGDVFGGKDHTTVMYADRKIRQEMTEKRDTYDEIQQLTQLIKSRGRN</sequence>
<organism>
    <name type="scientific">Corynebacterium efficiens (strain DSM 44549 / YS-314 / AJ 12310 / JCM 11189 / NBRC 100395)</name>
    <dbReference type="NCBI Taxonomy" id="196164"/>
    <lineage>
        <taxon>Bacteria</taxon>
        <taxon>Bacillati</taxon>
        <taxon>Actinomycetota</taxon>
        <taxon>Actinomycetes</taxon>
        <taxon>Mycobacteriales</taxon>
        <taxon>Corynebacteriaceae</taxon>
        <taxon>Corynebacterium</taxon>
    </lineage>
</organism>
<gene>
    <name evidence="1" type="primary">dnaA</name>
    <name type="ordered locus">CE0001</name>
</gene>
<comment type="function">
    <text evidence="1">Plays an essential role in the initiation and regulation of chromosomal replication. ATP-DnaA binds to the origin of replication (oriC) to initiate formation of the DNA replication initiation complex once per cell cycle. Binds the DnaA box (a 9 base pair repeat at the origin) and separates the double-stranded (ds)DNA. Forms a right-handed helical filament on oriC DNA; dsDNA binds to the exterior of the filament while single-stranded (ss)DNA is stabiized in the filament's interior. The ATP-DnaA-oriC complex binds and stabilizes one strand of the AT-rich DNA unwinding element (DUE), permitting loading of DNA polymerase. After initiation quickly degrades to an ADP-DnaA complex that is not apt for DNA replication. Binds acidic phospholipids.</text>
</comment>
<comment type="subunit">
    <text evidence="1">Oligomerizes as a right-handed, spiral filament on DNA at oriC.</text>
</comment>
<comment type="subcellular location">
    <subcellularLocation>
        <location evidence="1">Cytoplasm</location>
    </subcellularLocation>
</comment>
<comment type="domain">
    <text evidence="1">Domain I is involved in oligomerization and binding regulators, domain II is flexibile and of varying length in different bacteria, domain III forms the AAA+ region, while domain IV binds dsDNA.</text>
</comment>
<comment type="similarity">
    <text evidence="1">Belongs to the DnaA family.</text>
</comment>
<keyword id="KW-0067">ATP-binding</keyword>
<keyword id="KW-0963">Cytoplasm</keyword>
<keyword id="KW-0235">DNA replication</keyword>
<keyword id="KW-0238">DNA-binding</keyword>
<keyword id="KW-0446">Lipid-binding</keyword>
<keyword id="KW-0547">Nucleotide-binding</keyword>
<keyword id="KW-1185">Reference proteome</keyword>
<evidence type="ECO:0000255" key="1">
    <source>
        <dbReference type="HAMAP-Rule" id="MF_00377"/>
    </source>
</evidence>
<evidence type="ECO:0000256" key="2">
    <source>
        <dbReference type="SAM" id="MobiDB-lite"/>
    </source>
</evidence>
<dbReference type="EMBL" id="BA000035">
    <property type="protein sequence ID" value="BAC16811.1"/>
    <property type="molecule type" value="Genomic_DNA"/>
</dbReference>
<dbReference type="RefSeq" id="WP_011074762.1">
    <property type="nucleotide sequence ID" value="NC_004369.1"/>
</dbReference>
<dbReference type="SMR" id="Q8FUL7"/>
<dbReference type="STRING" id="196164.gene:10740388"/>
<dbReference type="KEGG" id="cef:CE0001"/>
<dbReference type="eggNOG" id="COG0593">
    <property type="taxonomic scope" value="Bacteria"/>
</dbReference>
<dbReference type="HOGENOM" id="CLU_026910_2_0_11"/>
<dbReference type="OrthoDB" id="9807019at2"/>
<dbReference type="Proteomes" id="UP000001409">
    <property type="component" value="Chromosome"/>
</dbReference>
<dbReference type="GO" id="GO:0005737">
    <property type="term" value="C:cytoplasm"/>
    <property type="evidence" value="ECO:0007669"/>
    <property type="project" value="UniProtKB-SubCell"/>
</dbReference>
<dbReference type="GO" id="GO:0005886">
    <property type="term" value="C:plasma membrane"/>
    <property type="evidence" value="ECO:0007669"/>
    <property type="project" value="TreeGrafter"/>
</dbReference>
<dbReference type="GO" id="GO:0005524">
    <property type="term" value="F:ATP binding"/>
    <property type="evidence" value="ECO:0007669"/>
    <property type="project" value="UniProtKB-UniRule"/>
</dbReference>
<dbReference type="GO" id="GO:0016887">
    <property type="term" value="F:ATP hydrolysis activity"/>
    <property type="evidence" value="ECO:0007669"/>
    <property type="project" value="InterPro"/>
</dbReference>
<dbReference type="GO" id="GO:0003688">
    <property type="term" value="F:DNA replication origin binding"/>
    <property type="evidence" value="ECO:0007669"/>
    <property type="project" value="UniProtKB-UniRule"/>
</dbReference>
<dbReference type="GO" id="GO:0008289">
    <property type="term" value="F:lipid binding"/>
    <property type="evidence" value="ECO:0007669"/>
    <property type="project" value="UniProtKB-KW"/>
</dbReference>
<dbReference type="GO" id="GO:0006270">
    <property type="term" value="P:DNA replication initiation"/>
    <property type="evidence" value="ECO:0007669"/>
    <property type="project" value="UniProtKB-UniRule"/>
</dbReference>
<dbReference type="GO" id="GO:0006275">
    <property type="term" value="P:regulation of DNA replication"/>
    <property type="evidence" value="ECO:0007669"/>
    <property type="project" value="UniProtKB-UniRule"/>
</dbReference>
<dbReference type="CDD" id="cd00009">
    <property type="entry name" value="AAA"/>
    <property type="match status" value="1"/>
</dbReference>
<dbReference type="CDD" id="cd06571">
    <property type="entry name" value="Bac_DnaA_C"/>
    <property type="match status" value="1"/>
</dbReference>
<dbReference type="FunFam" id="1.10.1750.10:FF:000002">
    <property type="entry name" value="Chromosomal replication initiator protein DnaA"/>
    <property type="match status" value="1"/>
</dbReference>
<dbReference type="FunFam" id="1.10.8.60:FF:000003">
    <property type="entry name" value="Chromosomal replication initiator protein DnaA"/>
    <property type="match status" value="1"/>
</dbReference>
<dbReference type="FunFam" id="3.40.50.300:FF:000150">
    <property type="entry name" value="Chromosomal replication initiator protein DnaA"/>
    <property type="match status" value="1"/>
</dbReference>
<dbReference type="Gene3D" id="1.10.1750.10">
    <property type="match status" value="1"/>
</dbReference>
<dbReference type="Gene3D" id="1.10.8.60">
    <property type="match status" value="1"/>
</dbReference>
<dbReference type="Gene3D" id="3.40.50.300">
    <property type="entry name" value="P-loop containing nucleotide triphosphate hydrolases"/>
    <property type="match status" value="1"/>
</dbReference>
<dbReference type="HAMAP" id="MF_00377">
    <property type="entry name" value="DnaA_bact"/>
    <property type="match status" value="1"/>
</dbReference>
<dbReference type="InterPro" id="IPR003593">
    <property type="entry name" value="AAA+_ATPase"/>
</dbReference>
<dbReference type="InterPro" id="IPR001957">
    <property type="entry name" value="Chromosome_initiator_DnaA"/>
</dbReference>
<dbReference type="InterPro" id="IPR020591">
    <property type="entry name" value="Chromosome_initiator_DnaA-like"/>
</dbReference>
<dbReference type="InterPro" id="IPR018312">
    <property type="entry name" value="Chromosome_initiator_DnaA_CS"/>
</dbReference>
<dbReference type="InterPro" id="IPR013159">
    <property type="entry name" value="DnaA_C"/>
</dbReference>
<dbReference type="InterPro" id="IPR013317">
    <property type="entry name" value="DnaA_dom"/>
</dbReference>
<dbReference type="InterPro" id="IPR027417">
    <property type="entry name" value="P-loop_NTPase"/>
</dbReference>
<dbReference type="InterPro" id="IPR010921">
    <property type="entry name" value="Trp_repressor/repl_initiator"/>
</dbReference>
<dbReference type="NCBIfam" id="TIGR00362">
    <property type="entry name" value="DnaA"/>
    <property type="match status" value="1"/>
</dbReference>
<dbReference type="NCBIfam" id="NF010686">
    <property type="entry name" value="PRK14086.1"/>
    <property type="match status" value="1"/>
</dbReference>
<dbReference type="PANTHER" id="PTHR30050">
    <property type="entry name" value="CHROMOSOMAL REPLICATION INITIATOR PROTEIN DNAA"/>
    <property type="match status" value="1"/>
</dbReference>
<dbReference type="PANTHER" id="PTHR30050:SF2">
    <property type="entry name" value="CHROMOSOMAL REPLICATION INITIATOR PROTEIN DNAA"/>
    <property type="match status" value="1"/>
</dbReference>
<dbReference type="Pfam" id="PF00308">
    <property type="entry name" value="Bac_DnaA"/>
    <property type="match status" value="1"/>
</dbReference>
<dbReference type="Pfam" id="PF08299">
    <property type="entry name" value="Bac_DnaA_C"/>
    <property type="match status" value="1"/>
</dbReference>
<dbReference type="PRINTS" id="PR00051">
    <property type="entry name" value="DNAA"/>
</dbReference>
<dbReference type="SMART" id="SM00382">
    <property type="entry name" value="AAA"/>
    <property type="match status" value="1"/>
</dbReference>
<dbReference type="SMART" id="SM00760">
    <property type="entry name" value="Bac_DnaA_C"/>
    <property type="match status" value="1"/>
</dbReference>
<dbReference type="SUPFAM" id="SSF52540">
    <property type="entry name" value="P-loop containing nucleoside triphosphate hydrolases"/>
    <property type="match status" value="1"/>
</dbReference>
<dbReference type="SUPFAM" id="SSF48295">
    <property type="entry name" value="TrpR-like"/>
    <property type="match status" value="1"/>
</dbReference>
<dbReference type="PROSITE" id="PS01008">
    <property type="entry name" value="DNAA"/>
    <property type="match status" value="1"/>
</dbReference>
<protein>
    <recommendedName>
        <fullName evidence="1">Chromosomal replication initiator protein DnaA</fullName>
    </recommendedName>
</protein>
<name>DNAA_COREF</name>
<reference key="1">
    <citation type="journal article" date="2003" name="Genome Res.">
        <title>Comparative complete genome sequence analysis of the amino acid replacements responsible for the thermostability of Corynebacterium efficiens.</title>
        <authorList>
            <person name="Nishio Y."/>
            <person name="Nakamura Y."/>
            <person name="Kawarabayasi Y."/>
            <person name="Usuda Y."/>
            <person name="Kimura E."/>
            <person name="Sugimoto S."/>
            <person name="Matsui K."/>
            <person name="Yamagishi A."/>
            <person name="Kikuchi H."/>
            <person name="Ikeo K."/>
            <person name="Gojobori T."/>
        </authorList>
    </citation>
    <scope>NUCLEOTIDE SEQUENCE [LARGE SCALE GENOMIC DNA]</scope>
    <source>
        <strain>DSM 44549 / YS-314 / AJ 12310 / JCM 11189 / NBRC 100395</strain>
    </source>
</reference>
<feature type="chain" id="PRO_0000114168" description="Chromosomal replication initiator protein DnaA">
    <location>
        <begin position="1"/>
        <end position="573"/>
    </location>
</feature>
<feature type="region of interest" description="Domain I, interacts with DnaA modulators" evidence="1">
    <location>
        <begin position="1"/>
        <end position="85"/>
    </location>
</feature>
<feature type="region of interest" description="Domain II" evidence="1">
    <location>
        <begin position="85"/>
        <end position="231"/>
    </location>
</feature>
<feature type="region of interest" description="Disordered" evidence="2">
    <location>
        <begin position="91"/>
        <end position="232"/>
    </location>
</feature>
<feature type="region of interest" description="Domain III, AAA+ region" evidence="1">
    <location>
        <begin position="232"/>
        <end position="448"/>
    </location>
</feature>
<feature type="region of interest" description="Domain IV, binds dsDNA" evidence="1">
    <location>
        <begin position="449"/>
        <end position="573"/>
    </location>
</feature>
<feature type="compositionally biased region" description="Low complexity" evidence="2">
    <location>
        <begin position="116"/>
        <end position="169"/>
    </location>
</feature>
<feature type="compositionally biased region" description="Polar residues" evidence="2">
    <location>
        <begin position="178"/>
        <end position="191"/>
    </location>
</feature>
<feature type="compositionally biased region" description="Pro residues" evidence="2">
    <location>
        <begin position="202"/>
        <end position="213"/>
    </location>
</feature>
<feature type="binding site" evidence="1">
    <location>
        <position position="276"/>
    </location>
    <ligand>
        <name>ATP</name>
        <dbReference type="ChEBI" id="CHEBI:30616"/>
    </ligand>
</feature>
<feature type="binding site" evidence="1">
    <location>
        <position position="278"/>
    </location>
    <ligand>
        <name>ATP</name>
        <dbReference type="ChEBI" id="CHEBI:30616"/>
    </ligand>
</feature>
<feature type="binding site" evidence="1">
    <location>
        <position position="279"/>
    </location>
    <ligand>
        <name>ATP</name>
        <dbReference type="ChEBI" id="CHEBI:30616"/>
    </ligand>
</feature>
<feature type="binding site" evidence="1">
    <location>
        <position position="280"/>
    </location>
    <ligand>
        <name>ATP</name>
        <dbReference type="ChEBI" id="CHEBI:30616"/>
    </ligand>
</feature>
<proteinExistence type="inferred from homology"/>
<accession>Q8FUL7</accession>